<sequence length="346" mass="38798">MIIYKQGITFLQKENNNTIHLNTMFFLSPAETHQRMAAENHSFVTKFILVGLTEKSELQLPLFLVFLGIYVVTVLGNLGMITLIGLSSHLHTPMYCFLSSLSFIDFCHSTVITPKMLVNFVTEKNIISYPECMTQLYFFLVFAIAECHMLAAMAYDGYVAICSPLLYSIIISNKACFSLILVVYVIGLICASAHIGCMFRVQFCKFDVINHYFCDLISILKLSCSSTYINELLILIFSGINILVPSLTILSSYIFIIASILRIRYTEGRSKAFSTCSSHISAVSVFFGSAAFMYLQPSSVSSMDQGKVSSVFYTIVVPMLNPLIYSLRNKDVHVALKKTLGKRTFL</sequence>
<comment type="function">
    <text evidence="3">Odorant receptor.</text>
</comment>
<comment type="subcellular location">
    <subcellularLocation>
        <location>Cell membrane</location>
        <topology>Multi-pass membrane protein</topology>
    </subcellularLocation>
</comment>
<comment type="similarity">
    <text evidence="2">Belongs to the G-protein coupled receptor 1 family.</text>
</comment>
<comment type="sequence caution" evidence="3">
    <conflict type="erroneous initiation">
        <sequence resource="EMBL-CDS" id="BAC06171"/>
    </conflict>
    <text>Truncated N-terminus.</text>
</comment>
<comment type="online information" name="Human Olfactory Receptor Data Exploratorium (HORDE)">
    <link uri="http://genome.weizmann.ac.il/horde/card/index/symbol:OR8G5"/>
</comment>
<proteinExistence type="evidence at transcript level"/>
<reference key="1">
    <citation type="submission" date="2001-07" db="EMBL/GenBank/DDBJ databases">
        <title>Genome-wide discovery and analysis of human seven transmembrane helix receptor genes.</title>
        <authorList>
            <person name="Suwa M."/>
            <person name="Sato T."/>
            <person name="Okouchi I."/>
            <person name="Arita M."/>
            <person name="Futami K."/>
            <person name="Matsumoto S."/>
            <person name="Tsutsumi S."/>
            <person name="Aburatani H."/>
            <person name="Asai K."/>
            <person name="Akiyama Y."/>
        </authorList>
    </citation>
    <scope>NUCLEOTIDE SEQUENCE [GENOMIC DNA]</scope>
</reference>
<reference key="2">
    <citation type="journal article" date="2006" name="Nature">
        <title>Human chromosome 11 DNA sequence and analysis including novel gene identification.</title>
        <authorList>
            <person name="Taylor T.D."/>
            <person name="Noguchi H."/>
            <person name="Totoki Y."/>
            <person name="Toyoda A."/>
            <person name="Kuroki Y."/>
            <person name="Dewar K."/>
            <person name="Lloyd C."/>
            <person name="Itoh T."/>
            <person name="Takeda T."/>
            <person name="Kim D.-W."/>
            <person name="She X."/>
            <person name="Barlow K.F."/>
            <person name="Bloom T."/>
            <person name="Bruford E."/>
            <person name="Chang J.L."/>
            <person name="Cuomo C.A."/>
            <person name="Eichler E."/>
            <person name="FitzGerald M.G."/>
            <person name="Jaffe D.B."/>
            <person name="LaButti K."/>
            <person name="Nicol R."/>
            <person name="Park H.-S."/>
            <person name="Seaman C."/>
            <person name="Sougnez C."/>
            <person name="Yang X."/>
            <person name="Zimmer A.R."/>
            <person name="Zody M.C."/>
            <person name="Birren B.W."/>
            <person name="Nusbaum C."/>
            <person name="Fujiyama A."/>
            <person name="Hattori M."/>
            <person name="Rogers J."/>
            <person name="Lander E.S."/>
            <person name="Sakaki Y."/>
        </authorList>
    </citation>
    <scope>NUCLEOTIDE SEQUENCE [LARGE SCALE GENOMIC DNA]</scope>
</reference>
<reference key="3">
    <citation type="journal article" date="2004" name="Genome Res.">
        <title>The status, quality, and expansion of the NIH full-length cDNA project: the Mammalian Gene Collection (MGC).</title>
        <authorList>
            <consortium name="The MGC Project Team"/>
        </authorList>
    </citation>
    <scope>NUCLEOTIDE SEQUENCE [LARGE SCALE MRNA]</scope>
</reference>
<reference key="4">
    <citation type="journal article" date="2004" name="Proc. Natl. Acad. Sci. U.S.A.">
        <title>The human olfactory receptor gene family.</title>
        <authorList>
            <person name="Malnic B."/>
            <person name="Godfrey P.A."/>
            <person name="Buck L.B."/>
        </authorList>
    </citation>
    <scope>IDENTIFICATION</scope>
</reference>
<reference key="5">
    <citation type="journal article" date="2004" name="Proc. Natl. Acad. Sci. U.S.A.">
        <authorList>
            <person name="Malnic B."/>
            <person name="Godfrey P.A."/>
            <person name="Buck L.B."/>
        </authorList>
    </citation>
    <scope>ERRATUM OF PUBMED:14983052</scope>
</reference>
<evidence type="ECO:0000255" key="1"/>
<evidence type="ECO:0000255" key="2">
    <source>
        <dbReference type="PROSITE-ProRule" id="PRU00521"/>
    </source>
</evidence>
<evidence type="ECO:0000305" key="3"/>
<organism>
    <name type="scientific">Homo sapiens</name>
    <name type="common">Human</name>
    <dbReference type="NCBI Taxonomy" id="9606"/>
    <lineage>
        <taxon>Eukaryota</taxon>
        <taxon>Metazoa</taxon>
        <taxon>Chordata</taxon>
        <taxon>Craniata</taxon>
        <taxon>Vertebrata</taxon>
        <taxon>Euteleostomi</taxon>
        <taxon>Mammalia</taxon>
        <taxon>Eutheria</taxon>
        <taxon>Euarchontoglires</taxon>
        <taxon>Primates</taxon>
        <taxon>Haplorrhini</taxon>
        <taxon>Catarrhini</taxon>
        <taxon>Hominidae</taxon>
        <taxon>Homo</taxon>
    </lineage>
</organism>
<gene>
    <name type="primary">OR8G5</name>
    <name type="synonym">OR8G5P</name>
    <name type="synonym">OR8G6</name>
</gene>
<protein>
    <recommendedName>
        <fullName>Olfactory receptor 8G5</fullName>
    </recommendedName>
    <alternativeName>
        <fullName>Olfactory receptor 8G6</fullName>
    </alternativeName>
    <alternativeName>
        <fullName>Olfactory receptor OR11-298</fullName>
    </alternativeName>
</protein>
<name>OR8G5_HUMAN</name>
<accession>Q8NG78</accession>
<accession>B2RND3</accession>
<accession>Q6IEU6</accession>
<dbReference type="EMBL" id="AB065958">
    <property type="protein sequence ID" value="BAC06171.1"/>
    <property type="status" value="ALT_INIT"/>
    <property type="molecule type" value="Genomic_DNA"/>
</dbReference>
<dbReference type="EMBL" id="AP002965">
    <property type="status" value="NOT_ANNOTATED_CDS"/>
    <property type="molecule type" value="Genomic_DNA"/>
</dbReference>
<dbReference type="EMBL" id="BC136820">
    <property type="protein sequence ID" value="AAI36821.1"/>
    <property type="molecule type" value="mRNA"/>
</dbReference>
<dbReference type="EMBL" id="BK004516">
    <property type="protein sequence ID" value="DAA04914.1"/>
    <property type="molecule type" value="Genomic_DNA"/>
</dbReference>
<dbReference type="RefSeq" id="NP_001005198.1">
    <property type="nucleotide sequence ID" value="NM_001005198.1"/>
</dbReference>
<dbReference type="RefSeq" id="XP_011540964.1">
    <property type="nucleotide sequence ID" value="XM_011542662.2"/>
</dbReference>
<dbReference type="RefSeq" id="XP_011540965.1">
    <property type="nucleotide sequence ID" value="XM_011542663.2"/>
</dbReference>
<dbReference type="RefSeq" id="XP_011540966.1">
    <property type="nucleotide sequence ID" value="XM_011542664.2"/>
</dbReference>
<dbReference type="RefSeq" id="XP_011540967.1">
    <property type="nucleotide sequence ID" value="XM_011542665.2"/>
</dbReference>
<dbReference type="RefSeq" id="XP_011540968.1">
    <property type="nucleotide sequence ID" value="XM_011542666.2"/>
</dbReference>
<dbReference type="RefSeq" id="XP_011540969.1">
    <property type="nucleotide sequence ID" value="XM_011542667.2"/>
</dbReference>
<dbReference type="SMR" id="Q8NG78"/>
<dbReference type="BioGRID" id="128586">
    <property type="interactions" value="2"/>
</dbReference>
<dbReference type="FunCoup" id="Q8NG78">
    <property type="interactions" value="417"/>
</dbReference>
<dbReference type="STRING" id="9606.ENSP00000477014"/>
<dbReference type="GlyCosmos" id="Q8NG78">
    <property type="glycosylation" value="2 sites, No reported glycans"/>
</dbReference>
<dbReference type="GlyGen" id="Q8NG78">
    <property type="glycosylation" value="2 sites"/>
</dbReference>
<dbReference type="iPTMnet" id="Q8NG78"/>
<dbReference type="PhosphoSitePlus" id="Q8NG78"/>
<dbReference type="BioMuta" id="OR8G5"/>
<dbReference type="jPOST" id="Q8NG78"/>
<dbReference type="MassIVE" id="Q8NG78"/>
<dbReference type="PaxDb" id="9606-ENSP00000477014"/>
<dbReference type="PeptideAtlas" id="Q8NG78"/>
<dbReference type="DNASU" id="219865"/>
<dbReference type="GeneID" id="219865"/>
<dbReference type="KEGG" id="hsa:219865"/>
<dbReference type="UCSC" id="uc031yio.1">
    <property type="organism name" value="human"/>
</dbReference>
<dbReference type="AGR" id="HGNC:19622"/>
<dbReference type="CTD" id="219865"/>
<dbReference type="DisGeNET" id="219865"/>
<dbReference type="GeneCards" id="OR8G5"/>
<dbReference type="HGNC" id="HGNC:19622">
    <property type="gene designation" value="OR8G5"/>
</dbReference>
<dbReference type="neXtProt" id="NX_Q8NG78"/>
<dbReference type="eggNOG" id="ENOG502SJS1">
    <property type="taxonomic scope" value="Eukaryota"/>
</dbReference>
<dbReference type="HOGENOM" id="CLU_012526_1_0_1"/>
<dbReference type="InParanoid" id="Q8NG78"/>
<dbReference type="OrthoDB" id="9444602at2759"/>
<dbReference type="PAN-GO" id="Q8NG78">
    <property type="GO annotations" value="4 GO annotations based on evolutionary models"/>
</dbReference>
<dbReference type="PathwayCommons" id="Q8NG78"/>
<dbReference type="Reactome" id="R-HSA-9752946">
    <property type="pathway name" value="Expression and translocation of olfactory receptors"/>
</dbReference>
<dbReference type="BioGRID-ORCS" id="219865">
    <property type="hits" value="5 hits in 706 CRISPR screens"/>
</dbReference>
<dbReference type="GeneWiki" id="OR8G5"/>
<dbReference type="GenomeRNAi" id="219865"/>
<dbReference type="Pharos" id="Q8NG78">
    <property type="development level" value="Tdark"/>
</dbReference>
<dbReference type="PRO" id="PR:Q8NG78"/>
<dbReference type="Proteomes" id="UP000005640">
    <property type="component" value="Unplaced"/>
</dbReference>
<dbReference type="RNAct" id="Q8NG78">
    <property type="molecule type" value="protein"/>
</dbReference>
<dbReference type="GO" id="GO:0005886">
    <property type="term" value="C:plasma membrane"/>
    <property type="evidence" value="ECO:0007669"/>
    <property type="project" value="UniProtKB-SubCell"/>
</dbReference>
<dbReference type="GO" id="GO:0004930">
    <property type="term" value="F:G protein-coupled receptor activity"/>
    <property type="evidence" value="ECO:0007669"/>
    <property type="project" value="UniProtKB-KW"/>
</dbReference>
<dbReference type="GO" id="GO:0005549">
    <property type="term" value="F:odorant binding"/>
    <property type="evidence" value="ECO:0000318"/>
    <property type="project" value="GO_Central"/>
</dbReference>
<dbReference type="GO" id="GO:0004984">
    <property type="term" value="F:olfactory receptor activity"/>
    <property type="evidence" value="ECO:0000318"/>
    <property type="project" value="GO_Central"/>
</dbReference>
<dbReference type="GO" id="GO:0007186">
    <property type="term" value="P:G protein-coupled receptor signaling pathway"/>
    <property type="evidence" value="ECO:0000318"/>
    <property type="project" value="GO_Central"/>
</dbReference>
<dbReference type="GO" id="GO:0007608">
    <property type="term" value="P:sensory perception of smell"/>
    <property type="evidence" value="ECO:0000318"/>
    <property type="project" value="GO_Central"/>
</dbReference>
<dbReference type="CDD" id="cd15406">
    <property type="entry name" value="7tmA_OR8D-like"/>
    <property type="match status" value="1"/>
</dbReference>
<dbReference type="FunFam" id="1.20.1070.10:FF:000004">
    <property type="entry name" value="Olfactory receptor"/>
    <property type="match status" value="1"/>
</dbReference>
<dbReference type="Gene3D" id="1.20.1070.10">
    <property type="entry name" value="Rhodopsin 7-helix transmembrane proteins"/>
    <property type="match status" value="1"/>
</dbReference>
<dbReference type="InterPro" id="IPR000276">
    <property type="entry name" value="GPCR_Rhodpsn"/>
</dbReference>
<dbReference type="InterPro" id="IPR017452">
    <property type="entry name" value="GPCR_Rhodpsn_7TM"/>
</dbReference>
<dbReference type="InterPro" id="IPR000725">
    <property type="entry name" value="Olfact_rcpt"/>
</dbReference>
<dbReference type="PANTHER" id="PTHR48018">
    <property type="entry name" value="OLFACTORY RECEPTOR"/>
    <property type="match status" value="1"/>
</dbReference>
<dbReference type="Pfam" id="PF13853">
    <property type="entry name" value="7tm_4"/>
    <property type="match status" value="1"/>
</dbReference>
<dbReference type="PRINTS" id="PR00237">
    <property type="entry name" value="GPCRRHODOPSN"/>
</dbReference>
<dbReference type="PRINTS" id="PR00245">
    <property type="entry name" value="OLFACTORYR"/>
</dbReference>
<dbReference type="SUPFAM" id="SSF81321">
    <property type="entry name" value="Family A G protein-coupled receptor-like"/>
    <property type="match status" value="1"/>
</dbReference>
<dbReference type="PROSITE" id="PS50262">
    <property type="entry name" value="G_PROTEIN_RECEP_F1_2"/>
    <property type="match status" value="1"/>
</dbReference>
<feature type="chain" id="PRO_0000150664" description="Olfactory receptor 8G5">
    <location>
        <begin position="1"/>
        <end position="346"/>
    </location>
</feature>
<feature type="topological domain" description="Extracellular" evidence="1">
    <location>
        <begin position="1"/>
        <end position="60"/>
    </location>
</feature>
<feature type="transmembrane region" description="Helical; Name=1" evidence="1">
    <location>
        <begin position="61"/>
        <end position="81"/>
    </location>
</feature>
<feature type="topological domain" description="Cytoplasmic" evidence="1">
    <location>
        <begin position="82"/>
        <end position="89"/>
    </location>
</feature>
<feature type="transmembrane region" description="Helical; Name=2" evidence="1">
    <location>
        <begin position="90"/>
        <end position="110"/>
    </location>
</feature>
<feature type="topological domain" description="Extracellular" evidence="1">
    <location>
        <begin position="111"/>
        <end position="134"/>
    </location>
</feature>
<feature type="transmembrane region" description="Helical; Name=3" evidence="1">
    <location>
        <begin position="135"/>
        <end position="155"/>
    </location>
</feature>
<feature type="topological domain" description="Cytoplasmic" evidence="1">
    <location>
        <begin position="156"/>
        <end position="174"/>
    </location>
</feature>
<feature type="transmembrane region" description="Helical; Name=4" evidence="1">
    <location>
        <begin position="175"/>
        <end position="195"/>
    </location>
</feature>
<feature type="topological domain" description="Extracellular" evidence="1">
    <location>
        <begin position="196"/>
        <end position="232"/>
    </location>
</feature>
<feature type="transmembrane region" description="Helical; Name=5" evidence="1">
    <location>
        <begin position="233"/>
        <end position="252"/>
    </location>
</feature>
<feature type="topological domain" description="Cytoplasmic" evidence="1">
    <location>
        <begin position="253"/>
        <end position="272"/>
    </location>
</feature>
<feature type="transmembrane region" description="Helical; Name=6" evidence="1">
    <location>
        <begin position="273"/>
        <end position="293"/>
    </location>
</feature>
<feature type="topological domain" description="Extracellular" evidence="1">
    <location>
        <begin position="294"/>
        <end position="306"/>
    </location>
</feature>
<feature type="transmembrane region" description="Helical; Name=7" evidence="1">
    <location>
        <begin position="307"/>
        <end position="327"/>
    </location>
</feature>
<feature type="topological domain" description="Cytoplasmic" evidence="1">
    <location>
        <begin position="328"/>
        <end position="346"/>
    </location>
</feature>
<feature type="glycosylation site" description="N-linked (GlcNAc...) asparagine" evidence="1">
    <location>
        <position position="16"/>
    </location>
</feature>
<feature type="glycosylation site" description="N-linked (GlcNAc...) asparagine" evidence="1">
    <location>
        <position position="40"/>
    </location>
</feature>
<feature type="disulfide bond" evidence="2">
    <location>
        <begin position="132"/>
        <end position="214"/>
    </location>
</feature>
<keyword id="KW-1003">Cell membrane</keyword>
<keyword id="KW-1015">Disulfide bond</keyword>
<keyword id="KW-0297">G-protein coupled receptor</keyword>
<keyword id="KW-0325">Glycoprotein</keyword>
<keyword id="KW-0472">Membrane</keyword>
<keyword id="KW-0552">Olfaction</keyword>
<keyword id="KW-0675">Receptor</keyword>
<keyword id="KW-1185">Reference proteome</keyword>
<keyword id="KW-0716">Sensory transduction</keyword>
<keyword id="KW-0807">Transducer</keyword>
<keyword id="KW-0812">Transmembrane</keyword>
<keyword id="KW-1133">Transmembrane helix</keyword>